<evidence type="ECO:0000255" key="1">
    <source>
        <dbReference type="HAMAP-Rule" id="MF_00679"/>
    </source>
</evidence>
<feature type="chain" id="PRO_1000044876" description="Chaperone protein HscA homolog">
    <location>
        <begin position="1"/>
        <end position="620"/>
    </location>
</feature>
<name>HSCA_PSEU2</name>
<keyword id="KW-0067">ATP-binding</keyword>
<keyword id="KW-0143">Chaperone</keyword>
<keyword id="KW-0547">Nucleotide-binding</keyword>
<comment type="function">
    <text evidence="1">Chaperone involved in the maturation of iron-sulfur cluster-containing proteins. Has a low intrinsic ATPase activity which is markedly stimulated by HscB.</text>
</comment>
<comment type="similarity">
    <text evidence="1">Belongs to the heat shock protein 70 family.</text>
</comment>
<dbReference type="EMBL" id="CP000075">
    <property type="protein sequence ID" value="AAY36292.1"/>
    <property type="molecule type" value="Genomic_DNA"/>
</dbReference>
<dbReference type="RefSeq" id="WP_011266907.1">
    <property type="nucleotide sequence ID" value="NC_007005.1"/>
</dbReference>
<dbReference type="RefSeq" id="YP_234330.1">
    <property type="nucleotide sequence ID" value="NC_007005.1"/>
</dbReference>
<dbReference type="SMR" id="Q4ZX30"/>
<dbReference type="STRING" id="205918.Psyr_1241"/>
<dbReference type="KEGG" id="psb:Psyr_1241"/>
<dbReference type="PATRIC" id="fig|205918.7.peg.1273"/>
<dbReference type="eggNOG" id="COG0443">
    <property type="taxonomic scope" value="Bacteria"/>
</dbReference>
<dbReference type="HOGENOM" id="CLU_005965_2_3_6"/>
<dbReference type="OrthoDB" id="9766019at2"/>
<dbReference type="Proteomes" id="UP000000426">
    <property type="component" value="Chromosome"/>
</dbReference>
<dbReference type="GO" id="GO:0005524">
    <property type="term" value="F:ATP binding"/>
    <property type="evidence" value="ECO:0007669"/>
    <property type="project" value="UniProtKB-KW"/>
</dbReference>
<dbReference type="GO" id="GO:0016887">
    <property type="term" value="F:ATP hydrolysis activity"/>
    <property type="evidence" value="ECO:0007669"/>
    <property type="project" value="UniProtKB-UniRule"/>
</dbReference>
<dbReference type="GO" id="GO:0140662">
    <property type="term" value="F:ATP-dependent protein folding chaperone"/>
    <property type="evidence" value="ECO:0007669"/>
    <property type="project" value="InterPro"/>
</dbReference>
<dbReference type="GO" id="GO:0051082">
    <property type="term" value="F:unfolded protein binding"/>
    <property type="evidence" value="ECO:0007669"/>
    <property type="project" value="InterPro"/>
</dbReference>
<dbReference type="GO" id="GO:0016226">
    <property type="term" value="P:iron-sulfur cluster assembly"/>
    <property type="evidence" value="ECO:0007669"/>
    <property type="project" value="InterPro"/>
</dbReference>
<dbReference type="CDD" id="cd10236">
    <property type="entry name" value="ASKHA_NBD_HSP70_HscA"/>
    <property type="match status" value="1"/>
</dbReference>
<dbReference type="FunFam" id="3.30.420.40:FF:000046">
    <property type="entry name" value="Chaperone protein HscA"/>
    <property type="match status" value="1"/>
</dbReference>
<dbReference type="FunFam" id="2.60.34.10:FF:000005">
    <property type="entry name" value="Chaperone protein HscA homolog"/>
    <property type="match status" value="1"/>
</dbReference>
<dbReference type="Gene3D" id="1.20.1270.10">
    <property type="match status" value="1"/>
</dbReference>
<dbReference type="Gene3D" id="3.30.420.40">
    <property type="match status" value="2"/>
</dbReference>
<dbReference type="Gene3D" id="3.90.640.10">
    <property type="entry name" value="Actin, Chain A, domain 4"/>
    <property type="match status" value="1"/>
</dbReference>
<dbReference type="Gene3D" id="2.60.34.10">
    <property type="entry name" value="Substrate Binding Domain Of DNAk, Chain A, domain 1"/>
    <property type="match status" value="1"/>
</dbReference>
<dbReference type="HAMAP" id="MF_00679">
    <property type="entry name" value="HscA"/>
    <property type="match status" value="1"/>
</dbReference>
<dbReference type="InterPro" id="IPR043129">
    <property type="entry name" value="ATPase_NBD"/>
</dbReference>
<dbReference type="InterPro" id="IPR018181">
    <property type="entry name" value="Heat_shock_70_CS"/>
</dbReference>
<dbReference type="InterPro" id="IPR042039">
    <property type="entry name" value="HscA_NBD"/>
</dbReference>
<dbReference type="InterPro" id="IPR029048">
    <property type="entry name" value="HSP70_C_sf"/>
</dbReference>
<dbReference type="InterPro" id="IPR029047">
    <property type="entry name" value="HSP70_peptide-bd_sf"/>
</dbReference>
<dbReference type="InterPro" id="IPR013126">
    <property type="entry name" value="Hsp_70_fam"/>
</dbReference>
<dbReference type="InterPro" id="IPR010236">
    <property type="entry name" value="ISC_FeS_clus_asmbl_HscA"/>
</dbReference>
<dbReference type="NCBIfam" id="TIGR01991">
    <property type="entry name" value="HscA"/>
    <property type="match status" value="1"/>
</dbReference>
<dbReference type="NCBIfam" id="NF003520">
    <property type="entry name" value="PRK05183.1"/>
    <property type="match status" value="1"/>
</dbReference>
<dbReference type="PANTHER" id="PTHR19375">
    <property type="entry name" value="HEAT SHOCK PROTEIN 70KDA"/>
    <property type="match status" value="1"/>
</dbReference>
<dbReference type="Pfam" id="PF00012">
    <property type="entry name" value="HSP70"/>
    <property type="match status" value="1"/>
</dbReference>
<dbReference type="PRINTS" id="PR00301">
    <property type="entry name" value="HEATSHOCK70"/>
</dbReference>
<dbReference type="SUPFAM" id="SSF53067">
    <property type="entry name" value="Actin-like ATPase domain"/>
    <property type="match status" value="2"/>
</dbReference>
<dbReference type="SUPFAM" id="SSF100934">
    <property type="entry name" value="Heat shock protein 70kD (HSP70), C-terminal subdomain"/>
    <property type="match status" value="1"/>
</dbReference>
<dbReference type="SUPFAM" id="SSF100920">
    <property type="entry name" value="Heat shock protein 70kD (HSP70), peptide-binding domain"/>
    <property type="match status" value="1"/>
</dbReference>
<dbReference type="PROSITE" id="PS00297">
    <property type="entry name" value="HSP70_1"/>
    <property type="match status" value="1"/>
</dbReference>
<dbReference type="PROSITE" id="PS00329">
    <property type="entry name" value="HSP70_2"/>
    <property type="match status" value="1"/>
</dbReference>
<dbReference type="PROSITE" id="PS01036">
    <property type="entry name" value="HSP70_3"/>
    <property type="match status" value="2"/>
</dbReference>
<protein>
    <recommendedName>
        <fullName evidence="1">Chaperone protein HscA homolog</fullName>
    </recommendedName>
</protein>
<sequence length="620" mass="66492">MALLQIAEPGLSPQPHQRRLAVGIDLGTTNSLVAAVRSGLSEPLADAEGQVILPSAVRYHADRVEVGQSAKIAASQDPFNTVLSVKRLMGRGLTDVKQLGEQLPYRFVGGESHMPFIDTVQGPKSPVEVSADILKVLRQRAEASLGGELVGAVITVPAYFDDAQRQATKDAARLAGLNVLRLLNEPTAAAVAYGLDQKAEGVVAIYDLGGGTFDISILRLTGGVFEVLATGGDTALGGDDFDHAIASWIVTDAGLSADIDPSAQRSLLQAACSAKEALTDAESVEVVYGEWRGTLTREALNALIEPMVARSLKACRRAVRDTGIELEEVEAVVMVGGSTRVPRVREAVAELFGRQPLTEIDPDQVVAIGAAIQADTLAGNKRDGGELLLLDVIPLSLGLETMGGLMEKVIPRNTTIPVARGQEFTTYKDGQTAMKIHVLQGERELISDCRSLARFELRGIPPMVAGAAKIRVTFQVDADGLLSVSAREMGSGIESSIQVKPSYGLTDDEVTRMLKDSFEYAGDDKVARVLREHQVDAERLLEAVQGALDADGERLLDEEERLVINLQMDELRELMQGTDGYAIEQQTKRLSQVTDAFAARRLDSTVKAALAGRNLNEIEE</sequence>
<reference key="1">
    <citation type="journal article" date="2005" name="Proc. Natl. Acad. Sci. U.S.A.">
        <title>Comparison of the complete genome sequences of Pseudomonas syringae pv. syringae B728a and pv. tomato DC3000.</title>
        <authorList>
            <person name="Feil H."/>
            <person name="Feil W.S."/>
            <person name="Chain P."/>
            <person name="Larimer F."/>
            <person name="Dibartolo G."/>
            <person name="Copeland A."/>
            <person name="Lykidis A."/>
            <person name="Trong S."/>
            <person name="Nolan M."/>
            <person name="Goltsman E."/>
            <person name="Thiel J."/>
            <person name="Malfatti S."/>
            <person name="Loper J.E."/>
            <person name="Lapidus A."/>
            <person name="Detter J.C."/>
            <person name="Land M."/>
            <person name="Richardson P.M."/>
            <person name="Kyrpides N.C."/>
            <person name="Ivanova N."/>
            <person name="Lindow S.E."/>
        </authorList>
    </citation>
    <scope>NUCLEOTIDE SEQUENCE [LARGE SCALE GENOMIC DNA]</scope>
    <source>
        <strain>B728a</strain>
    </source>
</reference>
<organism>
    <name type="scientific">Pseudomonas syringae pv. syringae (strain B728a)</name>
    <dbReference type="NCBI Taxonomy" id="205918"/>
    <lineage>
        <taxon>Bacteria</taxon>
        <taxon>Pseudomonadati</taxon>
        <taxon>Pseudomonadota</taxon>
        <taxon>Gammaproteobacteria</taxon>
        <taxon>Pseudomonadales</taxon>
        <taxon>Pseudomonadaceae</taxon>
        <taxon>Pseudomonas</taxon>
        <taxon>Pseudomonas syringae</taxon>
    </lineage>
</organism>
<accession>Q4ZX30</accession>
<gene>
    <name evidence="1" type="primary">hscA</name>
    <name type="ordered locus">Psyr_1241</name>
</gene>
<proteinExistence type="inferred from homology"/>